<name>KAD_MESH7</name>
<keyword id="KW-0067">ATP-binding</keyword>
<keyword id="KW-0963">Cytoplasm</keyword>
<keyword id="KW-0418">Kinase</keyword>
<keyword id="KW-0479">Metal-binding</keyword>
<keyword id="KW-0545">Nucleotide biosynthesis</keyword>
<keyword id="KW-0547">Nucleotide-binding</keyword>
<keyword id="KW-0808">Transferase</keyword>
<keyword id="KW-0862">Zinc</keyword>
<protein>
    <recommendedName>
        <fullName evidence="1">Adenylate kinase</fullName>
        <shortName evidence="1">AK</shortName>
        <ecNumber evidence="1">2.7.4.3</ecNumber>
    </recommendedName>
    <alternativeName>
        <fullName evidence="1">ATP-AMP transphosphorylase</fullName>
    </alternativeName>
    <alternativeName>
        <fullName evidence="1">ATP:AMP phosphotransferase</fullName>
    </alternativeName>
    <alternativeName>
        <fullName evidence="1">Adenylate monophosphate kinase</fullName>
    </alternativeName>
</protein>
<organism>
    <name type="scientific">Mesomycoplasma hyopneumoniae (strain 7448)</name>
    <name type="common">Mycoplasma hyopneumoniae</name>
    <dbReference type="NCBI Taxonomy" id="262722"/>
    <lineage>
        <taxon>Bacteria</taxon>
        <taxon>Bacillati</taxon>
        <taxon>Mycoplasmatota</taxon>
        <taxon>Mycoplasmoidales</taxon>
        <taxon>Metamycoplasmataceae</taxon>
        <taxon>Mesomycoplasma</taxon>
    </lineage>
</organism>
<dbReference type="EC" id="2.7.4.3" evidence="1"/>
<dbReference type="EMBL" id="AE017244">
    <property type="protein sequence ID" value="AAZ53548.1"/>
    <property type="molecule type" value="Genomic_DNA"/>
</dbReference>
<dbReference type="RefSeq" id="WP_011290056.1">
    <property type="nucleotide sequence ID" value="NC_007332.1"/>
</dbReference>
<dbReference type="SMR" id="Q4A8J1"/>
<dbReference type="KEGG" id="mhp:MHP7448_0174"/>
<dbReference type="HOGENOM" id="CLU_032354_1_2_14"/>
<dbReference type="UniPathway" id="UPA00588">
    <property type="reaction ID" value="UER00649"/>
</dbReference>
<dbReference type="Proteomes" id="UP000000553">
    <property type="component" value="Chromosome"/>
</dbReference>
<dbReference type="GO" id="GO:0005737">
    <property type="term" value="C:cytoplasm"/>
    <property type="evidence" value="ECO:0007669"/>
    <property type="project" value="UniProtKB-SubCell"/>
</dbReference>
<dbReference type="GO" id="GO:0004017">
    <property type="term" value="F:adenylate kinase activity"/>
    <property type="evidence" value="ECO:0007669"/>
    <property type="project" value="UniProtKB-UniRule"/>
</dbReference>
<dbReference type="GO" id="GO:0005524">
    <property type="term" value="F:ATP binding"/>
    <property type="evidence" value="ECO:0007669"/>
    <property type="project" value="UniProtKB-UniRule"/>
</dbReference>
<dbReference type="GO" id="GO:0008270">
    <property type="term" value="F:zinc ion binding"/>
    <property type="evidence" value="ECO:0007669"/>
    <property type="project" value="UniProtKB-UniRule"/>
</dbReference>
<dbReference type="GO" id="GO:0044209">
    <property type="term" value="P:AMP salvage"/>
    <property type="evidence" value="ECO:0007669"/>
    <property type="project" value="UniProtKB-UniRule"/>
</dbReference>
<dbReference type="CDD" id="cd01428">
    <property type="entry name" value="ADK"/>
    <property type="match status" value="1"/>
</dbReference>
<dbReference type="Gene3D" id="3.40.50.300">
    <property type="entry name" value="P-loop containing nucleotide triphosphate hydrolases"/>
    <property type="match status" value="1"/>
</dbReference>
<dbReference type="HAMAP" id="MF_00235">
    <property type="entry name" value="Adenylate_kinase_Adk"/>
    <property type="match status" value="1"/>
</dbReference>
<dbReference type="InterPro" id="IPR006259">
    <property type="entry name" value="Adenyl_kin_sub"/>
</dbReference>
<dbReference type="InterPro" id="IPR000850">
    <property type="entry name" value="Adenylat/UMP-CMP_kin"/>
</dbReference>
<dbReference type="InterPro" id="IPR033690">
    <property type="entry name" value="Adenylat_kinase_CS"/>
</dbReference>
<dbReference type="InterPro" id="IPR007862">
    <property type="entry name" value="Adenylate_kinase_lid-dom"/>
</dbReference>
<dbReference type="InterPro" id="IPR036193">
    <property type="entry name" value="ADK_active_lid_dom_sf"/>
</dbReference>
<dbReference type="InterPro" id="IPR027417">
    <property type="entry name" value="P-loop_NTPase"/>
</dbReference>
<dbReference type="NCBIfam" id="TIGR01351">
    <property type="entry name" value="adk"/>
    <property type="match status" value="1"/>
</dbReference>
<dbReference type="PANTHER" id="PTHR23359">
    <property type="entry name" value="NUCLEOTIDE KINASE"/>
    <property type="match status" value="1"/>
</dbReference>
<dbReference type="Pfam" id="PF00406">
    <property type="entry name" value="ADK"/>
    <property type="match status" value="1"/>
</dbReference>
<dbReference type="Pfam" id="PF05191">
    <property type="entry name" value="ADK_lid"/>
    <property type="match status" value="1"/>
</dbReference>
<dbReference type="PRINTS" id="PR00094">
    <property type="entry name" value="ADENYLTKNASE"/>
</dbReference>
<dbReference type="SUPFAM" id="SSF57774">
    <property type="entry name" value="Microbial and mitochondrial ADK, insert 'zinc finger' domain"/>
    <property type="match status" value="1"/>
</dbReference>
<dbReference type="SUPFAM" id="SSF52540">
    <property type="entry name" value="P-loop containing nucleoside triphosphate hydrolases"/>
    <property type="match status" value="1"/>
</dbReference>
<dbReference type="PROSITE" id="PS00113">
    <property type="entry name" value="ADENYLATE_KINASE"/>
    <property type="match status" value="1"/>
</dbReference>
<accession>Q4A8J1</accession>
<proteinExistence type="inferred from homology"/>
<feature type="chain" id="PRO_1000021747" description="Adenylate kinase">
    <location>
        <begin position="1"/>
        <end position="212"/>
    </location>
</feature>
<feature type="region of interest" description="NMP" evidence="1">
    <location>
        <begin position="34"/>
        <end position="63"/>
    </location>
</feature>
<feature type="region of interest" description="LID" evidence="1">
    <location>
        <begin position="126"/>
        <end position="163"/>
    </location>
</feature>
<feature type="binding site" evidence="1">
    <location>
        <begin position="14"/>
        <end position="19"/>
    </location>
    <ligand>
        <name>ATP</name>
        <dbReference type="ChEBI" id="CHEBI:30616"/>
    </ligand>
</feature>
<feature type="binding site" evidence="1">
    <location>
        <position position="35"/>
    </location>
    <ligand>
        <name>AMP</name>
        <dbReference type="ChEBI" id="CHEBI:456215"/>
    </ligand>
</feature>
<feature type="binding site" evidence="1">
    <location>
        <position position="40"/>
    </location>
    <ligand>
        <name>AMP</name>
        <dbReference type="ChEBI" id="CHEBI:456215"/>
    </ligand>
</feature>
<feature type="binding site" evidence="1">
    <location>
        <begin position="61"/>
        <end position="63"/>
    </location>
    <ligand>
        <name>AMP</name>
        <dbReference type="ChEBI" id="CHEBI:456215"/>
    </ligand>
</feature>
<feature type="binding site" evidence="1">
    <location>
        <begin position="89"/>
        <end position="92"/>
    </location>
    <ligand>
        <name>AMP</name>
        <dbReference type="ChEBI" id="CHEBI:456215"/>
    </ligand>
</feature>
<feature type="binding site" evidence="1">
    <location>
        <position position="96"/>
    </location>
    <ligand>
        <name>AMP</name>
        <dbReference type="ChEBI" id="CHEBI:456215"/>
    </ligand>
</feature>
<feature type="binding site" evidence="1">
    <location>
        <position position="127"/>
    </location>
    <ligand>
        <name>ATP</name>
        <dbReference type="ChEBI" id="CHEBI:30616"/>
    </ligand>
</feature>
<feature type="binding site" evidence="1">
    <location>
        <position position="130"/>
    </location>
    <ligand>
        <name>Zn(2+)</name>
        <dbReference type="ChEBI" id="CHEBI:29105"/>
        <note>structural</note>
    </ligand>
</feature>
<feature type="binding site" evidence="1">
    <location>
        <position position="133"/>
    </location>
    <ligand>
        <name>Zn(2+)</name>
        <dbReference type="ChEBI" id="CHEBI:29105"/>
        <note>structural</note>
    </ligand>
</feature>
<feature type="binding site" evidence="1">
    <location>
        <begin position="136"/>
        <end position="137"/>
    </location>
    <ligand>
        <name>ATP</name>
        <dbReference type="ChEBI" id="CHEBI:30616"/>
    </ligand>
</feature>
<feature type="binding site" evidence="1">
    <location>
        <position position="150"/>
    </location>
    <ligand>
        <name>Zn(2+)</name>
        <dbReference type="ChEBI" id="CHEBI:29105"/>
        <note>structural</note>
    </ligand>
</feature>
<feature type="binding site" evidence="1">
    <location>
        <position position="153"/>
    </location>
    <ligand>
        <name>Zn(2+)</name>
        <dbReference type="ChEBI" id="CHEBI:29105"/>
        <note>structural</note>
    </ligand>
</feature>
<feature type="binding site" evidence="1">
    <location>
        <position position="160"/>
    </location>
    <ligand>
        <name>AMP</name>
        <dbReference type="ChEBI" id="CHEBI:456215"/>
    </ligand>
</feature>
<feature type="binding site" evidence="1">
    <location>
        <position position="171"/>
    </location>
    <ligand>
        <name>AMP</name>
        <dbReference type="ChEBI" id="CHEBI:456215"/>
    </ligand>
</feature>
<feature type="binding site" evidence="1">
    <location>
        <position position="199"/>
    </location>
    <ligand>
        <name>ATP</name>
        <dbReference type="ChEBI" id="CHEBI:30616"/>
    </ligand>
</feature>
<gene>
    <name evidence="1" type="primary">adk</name>
    <name type="ordered locus">MHP7448_0174</name>
</gene>
<sequence>MKSNKKILFIGAPGSGKGTISKILVEKYKLVHISTGDLFRKKISEDSQFAAQIQNYLSSGSYVPDEITNKLVADFIKKIPKNQGYILDGYPRTLQQLEFMIKNGINLDCVFYLKIKNETIISRLSQRLFCQKCQKSYNLLLAKPKNGLKCDLDNTDLITRNDDRPEIITHRIEKFNNSVIPIVEFFKKSGIIYYLDAEQTLEETVIEIEKWL</sequence>
<reference key="1">
    <citation type="journal article" date="2005" name="J. Bacteriol.">
        <title>Swine and poultry pathogens: the complete genome sequences of two strains of Mycoplasma hyopneumoniae and a strain of Mycoplasma synoviae.</title>
        <authorList>
            <person name="Vasconcelos A.T.R."/>
            <person name="Ferreira H.B."/>
            <person name="Bizarro C.V."/>
            <person name="Bonatto S.L."/>
            <person name="Carvalho M.O."/>
            <person name="Pinto P.M."/>
            <person name="Almeida D.F."/>
            <person name="Almeida L.G.P."/>
            <person name="Almeida R."/>
            <person name="Alves-Junior L."/>
            <person name="Assuncao E.N."/>
            <person name="Azevedo V.A.C."/>
            <person name="Bogo M.R."/>
            <person name="Brigido M.M."/>
            <person name="Brocchi M."/>
            <person name="Burity H.A."/>
            <person name="Camargo A.A."/>
            <person name="Camargo S.S."/>
            <person name="Carepo M.S."/>
            <person name="Carraro D.M."/>
            <person name="de Mattos Cascardo J.C."/>
            <person name="Castro L.A."/>
            <person name="Cavalcanti G."/>
            <person name="Chemale G."/>
            <person name="Collevatti R.G."/>
            <person name="Cunha C.W."/>
            <person name="Dallagiovanna B."/>
            <person name="Dambros B.P."/>
            <person name="Dellagostin O.A."/>
            <person name="Falcao C."/>
            <person name="Fantinatti-Garboggini F."/>
            <person name="Felipe M.S.S."/>
            <person name="Fiorentin L."/>
            <person name="Franco G.R."/>
            <person name="Freitas N.S.A."/>
            <person name="Frias D."/>
            <person name="Grangeiro T.B."/>
            <person name="Grisard E.C."/>
            <person name="Guimaraes C.T."/>
            <person name="Hungria M."/>
            <person name="Jardim S.N."/>
            <person name="Krieger M.A."/>
            <person name="Laurino J.P."/>
            <person name="Lima L.F.A."/>
            <person name="Lopes M.I."/>
            <person name="Loreto E.L.S."/>
            <person name="Madeira H.M.F."/>
            <person name="Manfio G.P."/>
            <person name="Maranhao A.Q."/>
            <person name="Martinkovics C.T."/>
            <person name="Medeiros S.R.B."/>
            <person name="Moreira M.A.M."/>
            <person name="Neiva M."/>
            <person name="Ramalho-Neto C.E."/>
            <person name="Nicolas M.F."/>
            <person name="Oliveira S.C."/>
            <person name="Paixao R.F.C."/>
            <person name="Pedrosa F.O."/>
            <person name="Pena S.D.J."/>
            <person name="Pereira M."/>
            <person name="Pereira-Ferrari L."/>
            <person name="Piffer I."/>
            <person name="Pinto L.S."/>
            <person name="Potrich D.P."/>
            <person name="Salim A.C.M."/>
            <person name="Santos F.R."/>
            <person name="Schmitt R."/>
            <person name="Schneider M.P.C."/>
            <person name="Schrank A."/>
            <person name="Schrank I.S."/>
            <person name="Schuck A.F."/>
            <person name="Seuanez H.N."/>
            <person name="Silva D.W."/>
            <person name="Silva R."/>
            <person name="Silva S.C."/>
            <person name="Soares C.M.A."/>
            <person name="Souza K.R.L."/>
            <person name="Souza R.C."/>
            <person name="Staats C.C."/>
            <person name="Steffens M.B.R."/>
            <person name="Teixeira S.M.R."/>
            <person name="Urmenyi T.P."/>
            <person name="Vainstein M.H."/>
            <person name="Zuccherato L.W."/>
            <person name="Simpson A.J.G."/>
            <person name="Zaha A."/>
        </authorList>
    </citation>
    <scope>NUCLEOTIDE SEQUENCE [LARGE SCALE GENOMIC DNA]</scope>
    <source>
        <strain>7448</strain>
    </source>
</reference>
<evidence type="ECO:0000255" key="1">
    <source>
        <dbReference type="HAMAP-Rule" id="MF_00235"/>
    </source>
</evidence>
<comment type="function">
    <text evidence="1">Catalyzes the reversible transfer of the terminal phosphate group between ATP and AMP. Plays an important role in cellular energy homeostasis and in adenine nucleotide metabolism.</text>
</comment>
<comment type="catalytic activity">
    <reaction evidence="1">
        <text>AMP + ATP = 2 ADP</text>
        <dbReference type="Rhea" id="RHEA:12973"/>
        <dbReference type="ChEBI" id="CHEBI:30616"/>
        <dbReference type="ChEBI" id="CHEBI:456215"/>
        <dbReference type="ChEBI" id="CHEBI:456216"/>
        <dbReference type="EC" id="2.7.4.3"/>
    </reaction>
</comment>
<comment type="pathway">
    <text evidence="1">Purine metabolism; AMP biosynthesis via salvage pathway; AMP from ADP: step 1/1.</text>
</comment>
<comment type="subunit">
    <text evidence="1">Monomer.</text>
</comment>
<comment type="subcellular location">
    <subcellularLocation>
        <location evidence="1">Cytoplasm</location>
    </subcellularLocation>
</comment>
<comment type="domain">
    <text evidence="1">Consists of three domains, a large central CORE domain and two small peripheral domains, NMPbind and LID, which undergo movements during catalysis. The LID domain closes over the site of phosphoryl transfer upon ATP binding. Assembling and dissambling the active center during each catalytic cycle provides an effective means to prevent ATP hydrolysis. Some bacteria have evolved a zinc-coordinating structure that stabilizes the LID domain.</text>
</comment>
<comment type="similarity">
    <text evidence="1">Belongs to the adenylate kinase family.</text>
</comment>